<organism>
    <name type="scientific">Pectobacterium atrosepticum (strain SCRI 1043 / ATCC BAA-672)</name>
    <name type="common">Erwinia carotovora subsp. atroseptica</name>
    <dbReference type="NCBI Taxonomy" id="218491"/>
    <lineage>
        <taxon>Bacteria</taxon>
        <taxon>Pseudomonadati</taxon>
        <taxon>Pseudomonadota</taxon>
        <taxon>Gammaproteobacteria</taxon>
        <taxon>Enterobacterales</taxon>
        <taxon>Pectobacteriaceae</taxon>
        <taxon>Pectobacterium</taxon>
    </lineage>
</organism>
<comment type="function">
    <text evidence="1">Catalyzes the last two steps in the biosynthesis of 5-methylaminomethyl-2-thiouridine (mnm(5)s(2)U) at the wobble position (U34) in tRNA. Catalyzes the FAD-dependent demodification of cmnm(5)s(2)U34 to nm(5)s(2)U34, followed by the transfer of a methyl group from S-adenosyl-L-methionine to nm(5)s(2)U34, to form mnm(5)s(2)U34.</text>
</comment>
<comment type="catalytic activity">
    <reaction evidence="1">
        <text>5-aminomethyl-2-thiouridine(34) in tRNA + S-adenosyl-L-methionine = 5-methylaminomethyl-2-thiouridine(34) in tRNA + S-adenosyl-L-homocysteine + H(+)</text>
        <dbReference type="Rhea" id="RHEA:19569"/>
        <dbReference type="Rhea" id="RHEA-COMP:10195"/>
        <dbReference type="Rhea" id="RHEA-COMP:10197"/>
        <dbReference type="ChEBI" id="CHEBI:15378"/>
        <dbReference type="ChEBI" id="CHEBI:57856"/>
        <dbReference type="ChEBI" id="CHEBI:59789"/>
        <dbReference type="ChEBI" id="CHEBI:74454"/>
        <dbReference type="ChEBI" id="CHEBI:74455"/>
        <dbReference type="EC" id="2.1.1.61"/>
    </reaction>
</comment>
<comment type="cofactor">
    <cofactor evidence="1">
        <name>FAD</name>
        <dbReference type="ChEBI" id="CHEBI:57692"/>
    </cofactor>
</comment>
<comment type="subcellular location">
    <subcellularLocation>
        <location evidence="1">Cytoplasm</location>
    </subcellularLocation>
</comment>
<comment type="similarity">
    <text evidence="1">In the N-terminal section; belongs to the methyltransferase superfamily. tRNA (mnm(5)s(2)U34)-methyltransferase family.</text>
</comment>
<comment type="similarity">
    <text evidence="1">In the C-terminal section; belongs to the DAO family.</text>
</comment>
<keyword id="KW-0963">Cytoplasm</keyword>
<keyword id="KW-0274">FAD</keyword>
<keyword id="KW-0285">Flavoprotein</keyword>
<keyword id="KW-0489">Methyltransferase</keyword>
<keyword id="KW-0511">Multifunctional enzyme</keyword>
<keyword id="KW-0560">Oxidoreductase</keyword>
<keyword id="KW-1185">Reference proteome</keyword>
<keyword id="KW-0949">S-adenosyl-L-methionine</keyword>
<keyword id="KW-0808">Transferase</keyword>
<keyword id="KW-0819">tRNA processing</keyword>
<gene>
    <name evidence="1" type="primary">mnmC</name>
    <name type="ordered locus">ECA3064</name>
</gene>
<name>MNMC_PECAS</name>
<feature type="chain" id="PRO_0000095015" description="tRNA 5-methylaminomethyl-2-thiouridine biosynthesis bifunctional protein MnmC">
    <location>
        <begin position="1"/>
        <end position="675"/>
    </location>
</feature>
<feature type="region of interest" description="tRNA (mnm(5)s(2)U34)-methyltransferase">
    <location>
        <begin position="1"/>
        <end position="245"/>
    </location>
</feature>
<feature type="region of interest" description="FAD-dependent cmnm(5)s(2)U34 oxidoreductase">
    <location>
        <begin position="271"/>
        <end position="675"/>
    </location>
</feature>
<protein>
    <recommendedName>
        <fullName evidence="1">tRNA 5-methylaminomethyl-2-thiouridine biosynthesis bifunctional protein MnmC</fullName>
        <shortName evidence="1">tRNA mnm(5)s(2)U biosynthesis bifunctional protein</shortName>
    </recommendedName>
    <domain>
        <recommendedName>
            <fullName evidence="1">tRNA (mnm(5)s(2)U34)-methyltransferase</fullName>
            <ecNumber evidence="1">2.1.1.61</ecNumber>
        </recommendedName>
    </domain>
    <domain>
        <recommendedName>
            <fullName evidence="1">FAD-dependent cmnm(5)s(2)U34 oxidoreductase</fullName>
            <ecNumber evidence="1">1.5.-.-</ecNumber>
        </recommendedName>
    </domain>
</protein>
<sequence length="675" mass="74814">MANLPIQHASLSWNAQGTPVSQQFDDVYFSNQDGLAETRYVFLQGNQFPERFGTHPRTACVIAETGFGTGLNFLTLWQAFAHFRQQQPQATLRHLHFISFEKFPLRQHDLAAAHAQWPELAEFADELRQQWPLALPGCHRLILAQGSITLDLWFGDVNVILPELDDTQNHQVDAWFLDGFAPSKNPDMWTDNLFQAMARLCRKEGTFATFTAAGFVRRGLQQAGFHVSKVKGFGQKREMLSGLLPDTLPITSPTPWYSRPAASTTDDIAIIGGGIASVLTALALQRRGANVTLYCAESQPATGASGNRQGALYPLLNNRHDAVSRFFSLAFDFAHRSYSALAQQGLEFEHQWCGVSQLAWDEKSARKIEQILQGEWPEELVVSVDAQQLEKQSGLNPGVNGITYPDGGWLCPAELTAAALKLAQQNGLSVQMSTAVSALEKTDSGWALTLSAGQQVNHAVVVLANGHHITDWPQTRHLPGYAVRGQVSHIPTNPVLGQLKHVLCYDGYLTPVSPQHQTHCIGASYLRGQAHGDYREEEQQENRQRLLNCLPNADWAKTVDISDAQARQGVRCALRDHLPLIGAVPNYEQTLKEYENRLHPQHRADTVSSAPYWQDLFIIGALGSRGLCSAPLAAEILASQMYAEPLPLDRDTLAALNPNRFWIRKLLKGKPVTHD</sequence>
<evidence type="ECO:0000255" key="1">
    <source>
        <dbReference type="HAMAP-Rule" id="MF_01102"/>
    </source>
</evidence>
<reference key="1">
    <citation type="journal article" date="2004" name="Proc. Natl. Acad. Sci. U.S.A.">
        <title>Genome sequence of the enterobacterial phytopathogen Erwinia carotovora subsp. atroseptica and characterization of virulence factors.</title>
        <authorList>
            <person name="Bell K.S."/>
            <person name="Sebaihia M."/>
            <person name="Pritchard L."/>
            <person name="Holden M.T.G."/>
            <person name="Hyman L.J."/>
            <person name="Holeva M.C."/>
            <person name="Thomson N.R."/>
            <person name="Bentley S.D."/>
            <person name="Churcher L.J.C."/>
            <person name="Mungall K."/>
            <person name="Atkin R."/>
            <person name="Bason N."/>
            <person name="Brooks K."/>
            <person name="Chillingworth T."/>
            <person name="Clark K."/>
            <person name="Doggett J."/>
            <person name="Fraser A."/>
            <person name="Hance Z."/>
            <person name="Hauser H."/>
            <person name="Jagels K."/>
            <person name="Moule S."/>
            <person name="Norbertczak H."/>
            <person name="Ormond D."/>
            <person name="Price C."/>
            <person name="Quail M.A."/>
            <person name="Sanders M."/>
            <person name="Walker D."/>
            <person name="Whitehead S."/>
            <person name="Salmond G.P.C."/>
            <person name="Birch P.R.J."/>
            <person name="Parkhill J."/>
            <person name="Toth I.K."/>
        </authorList>
    </citation>
    <scope>NUCLEOTIDE SEQUENCE [LARGE SCALE GENOMIC DNA]</scope>
    <source>
        <strain>SCRI 1043 / ATCC BAA-672</strain>
    </source>
</reference>
<proteinExistence type="inferred from homology"/>
<accession>Q6D2N1</accession>
<dbReference type="EC" id="2.1.1.61" evidence="1"/>
<dbReference type="EC" id="1.5.-.-" evidence="1"/>
<dbReference type="EMBL" id="BX950851">
    <property type="protein sequence ID" value="CAG75963.1"/>
    <property type="molecule type" value="Genomic_DNA"/>
</dbReference>
<dbReference type="RefSeq" id="WP_011094588.1">
    <property type="nucleotide sequence ID" value="NC_004547.2"/>
</dbReference>
<dbReference type="SMR" id="Q6D2N1"/>
<dbReference type="STRING" id="218491.ECA3064"/>
<dbReference type="KEGG" id="eca:ECA3064"/>
<dbReference type="PATRIC" id="fig|218491.5.peg.3097"/>
<dbReference type="eggNOG" id="COG0665">
    <property type="taxonomic scope" value="Bacteria"/>
</dbReference>
<dbReference type="eggNOG" id="COG4121">
    <property type="taxonomic scope" value="Bacteria"/>
</dbReference>
<dbReference type="HOGENOM" id="CLU_022427_2_1_6"/>
<dbReference type="OrthoDB" id="9786494at2"/>
<dbReference type="Proteomes" id="UP000007966">
    <property type="component" value="Chromosome"/>
</dbReference>
<dbReference type="GO" id="GO:0005737">
    <property type="term" value="C:cytoplasm"/>
    <property type="evidence" value="ECO:0007669"/>
    <property type="project" value="UniProtKB-SubCell"/>
</dbReference>
<dbReference type="GO" id="GO:0050660">
    <property type="term" value="F:flavin adenine dinucleotide binding"/>
    <property type="evidence" value="ECO:0007669"/>
    <property type="project" value="UniProtKB-UniRule"/>
</dbReference>
<dbReference type="GO" id="GO:0016645">
    <property type="term" value="F:oxidoreductase activity, acting on the CH-NH group of donors"/>
    <property type="evidence" value="ECO:0007669"/>
    <property type="project" value="InterPro"/>
</dbReference>
<dbReference type="GO" id="GO:0004808">
    <property type="term" value="F:tRNA (5-methylaminomethyl-2-thiouridylate)(34)-methyltransferase activity"/>
    <property type="evidence" value="ECO:0007669"/>
    <property type="project" value="UniProtKB-EC"/>
</dbReference>
<dbReference type="GO" id="GO:0032259">
    <property type="term" value="P:methylation"/>
    <property type="evidence" value="ECO:0007669"/>
    <property type="project" value="UniProtKB-KW"/>
</dbReference>
<dbReference type="GO" id="GO:0002098">
    <property type="term" value="P:tRNA wobble uridine modification"/>
    <property type="evidence" value="ECO:0007669"/>
    <property type="project" value="TreeGrafter"/>
</dbReference>
<dbReference type="FunFam" id="3.40.50.150:FF:000107">
    <property type="entry name" value="tRNA 5-methylaminomethyl-2-thiouridine biosynthesis bifunctional protein MnmC"/>
    <property type="match status" value="1"/>
</dbReference>
<dbReference type="Gene3D" id="3.30.9.10">
    <property type="entry name" value="D-Amino Acid Oxidase, subunit A, domain 2"/>
    <property type="match status" value="1"/>
</dbReference>
<dbReference type="Gene3D" id="3.50.50.60">
    <property type="entry name" value="FAD/NAD(P)-binding domain"/>
    <property type="match status" value="1"/>
</dbReference>
<dbReference type="Gene3D" id="3.40.50.150">
    <property type="entry name" value="Vaccinia Virus protein VP39"/>
    <property type="match status" value="1"/>
</dbReference>
<dbReference type="HAMAP" id="MF_01102">
    <property type="entry name" value="MnmC"/>
    <property type="match status" value="1"/>
</dbReference>
<dbReference type="InterPro" id="IPR006076">
    <property type="entry name" value="FAD-dep_OxRdtase"/>
</dbReference>
<dbReference type="InterPro" id="IPR036188">
    <property type="entry name" value="FAD/NAD-bd_sf"/>
</dbReference>
<dbReference type="InterPro" id="IPR008471">
    <property type="entry name" value="MnmC-like_methylTransf"/>
</dbReference>
<dbReference type="InterPro" id="IPR029063">
    <property type="entry name" value="SAM-dependent_MTases_sf"/>
</dbReference>
<dbReference type="InterPro" id="IPR023032">
    <property type="entry name" value="tRNA_MAMT_biosynth_bifunc_MnmC"/>
</dbReference>
<dbReference type="InterPro" id="IPR047785">
    <property type="entry name" value="tRNA_MNMC2"/>
</dbReference>
<dbReference type="InterPro" id="IPR017610">
    <property type="entry name" value="tRNA_S-uridine_synth_MnmC_C"/>
</dbReference>
<dbReference type="NCBIfam" id="TIGR03197">
    <property type="entry name" value="MnmC_Cterm"/>
    <property type="match status" value="1"/>
</dbReference>
<dbReference type="NCBIfam" id="NF002481">
    <property type="entry name" value="PRK01747.1-2"/>
    <property type="match status" value="1"/>
</dbReference>
<dbReference type="NCBIfam" id="NF002482">
    <property type="entry name" value="PRK01747.1-3"/>
    <property type="match status" value="1"/>
</dbReference>
<dbReference type="NCBIfam" id="NF002484">
    <property type="entry name" value="PRK01747.1-5"/>
    <property type="match status" value="1"/>
</dbReference>
<dbReference type="NCBIfam" id="NF033855">
    <property type="entry name" value="tRNA_MNMC2"/>
    <property type="match status" value="1"/>
</dbReference>
<dbReference type="PANTHER" id="PTHR13847">
    <property type="entry name" value="SARCOSINE DEHYDROGENASE-RELATED"/>
    <property type="match status" value="1"/>
</dbReference>
<dbReference type="PANTHER" id="PTHR13847:SF283">
    <property type="entry name" value="TRNA 5-METHYLAMINOMETHYL-2-THIOURIDINE BIOSYNTHESIS BIFUNCTIONAL PROTEIN MNMC"/>
    <property type="match status" value="1"/>
</dbReference>
<dbReference type="Pfam" id="PF01266">
    <property type="entry name" value="DAO"/>
    <property type="match status" value="1"/>
</dbReference>
<dbReference type="Pfam" id="PF05430">
    <property type="entry name" value="Methyltransf_30"/>
    <property type="match status" value="1"/>
</dbReference>
<dbReference type="SUPFAM" id="SSF51905">
    <property type="entry name" value="FAD/NAD(P)-binding domain"/>
    <property type="match status" value="1"/>
</dbReference>